<evidence type="ECO:0000255" key="1">
    <source>
        <dbReference type="HAMAP-Rule" id="MF_04006"/>
    </source>
</evidence>
<evidence type="ECO:0000305" key="2"/>
<protein>
    <recommendedName>
        <fullName evidence="1">Protein E6</fullName>
    </recommendedName>
</protein>
<accession>Q02270</accession>
<keyword id="KW-0010">Activator</keyword>
<keyword id="KW-0238">DNA-binding</keyword>
<keyword id="KW-0244">Early protein</keyword>
<keyword id="KW-1035">Host cytoplasm</keyword>
<keyword id="KW-1048">Host nucleus</keyword>
<keyword id="KW-0945">Host-virus interaction</keyword>
<keyword id="KW-1090">Inhibition of host innate immune response by virus</keyword>
<keyword id="KW-0479">Metal-binding</keyword>
<keyword id="KW-1119">Modulation of host cell apoptosis by virus</keyword>
<keyword id="KW-1185">Reference proteome</keyword>
<keyword id="KW-0804">Transcription</keyword>
<keyword id="KW-0805">Transcription regulation</keyword>
<keyword id="KW-0899">Viral immunoevasion</keyword>
<keyword id="KW-0862">Zinc</keyword>
<keyword id="KW-0863">Zinc-finger</keyword>
<reference key="1">
    <citation type="journal article" date="1992" name="Virology">
        <title>Human papillomavirus type 13 and pygmy chimpanzee papillomavirus type 1: comparison of the genome organizations.</title>
        <authorList>
            <person name="van Ranst M."/>
            <person name="Fuse A."/>
            <person name="Fiten P."/>
            <person name="Beuken E."/>
            <person name="Pfister H."/>
            <person name="Burk R.D."/>
            <person name="Opdenakker G."/>
        </authorList>
    </citation>
    <scope>NUCLEOTIDE SEQUENCE [GENOMIC DNA]</scope>
</reference>
<proteinExistence type="inferred from homology"/>
<comment type="function">
    <text evidence="1">Plays a major role in the induction and maintenance of cellular transformation. E6 associates with host UBE3A/E6-AP ubiquitin-protein ligase and modulates its activity. Sequesters tumor suppressor TP53 in the host cytoplasm and modulates its activity by interacting with host EP300 that results in the reduction of TP53 acetylation and activation. In turn, apoptosis induced by DNA damage is inhibited. E6 also protects host keratinocytes from apoptosis by mediating the degradation of host BAK1. May also inhibit host immune response.</text>
</comment>
<comment type="subunit">
    <text evidence="1">Forms homodimers. Interacts with ubiquitin-protein ligase UBE3A/E6-AP; this interaction stimulates UBE3A ubiquitin activity. Interacts with host TP53 and EP300; this interaction inhibits TP53 activity.</text>
</comment>
<comment type="subcellular location">
    <subcellularLocation>
        <location evidence="1">Host cytoplasm</location>
    </subcellularLocation>
    <subcellularLocation>
        <location evidence="1">Host nucleus</location>
    </subcellularLocation>
</comment>
<comment type="miscellaneous">
    <text evidence="1">Belongs to the low risk human alphapapillomavirus family. The cancer-causing human papillomavirus E6 protein has a unique carboxy terminal PDZ domain containing substrate but low risk E6s do not possess this domain.</text>
</comment>
<comment type="similarity">
    <text evidence="2">Belongs to the papillomaviridae E6 protein family.</text>
</comment>
<organism>
    <name type="scientific">Pygmy chimpanzee papillomavirus type 1</name>
    <name type="common">PCPV-1</name>
    <dbReference type="NCBI Taxonomy" id="10576"/>
    <lineage>
        <taxon>Viruses</taxon>
        <taxon>Monodnaviria</taxon>
        <taxon>Shotokuvirae</taxon>
        <taxon>Cossaviricota</taxon>
        <taxon>Papovaviricetes</taxon>
        <taxon>Zurhausenvirales</taxon>
        <taxon>Papillomaviridae</taxon>
        <taxon>Firstpapillomavirinae</taxon>
        <taxon>Alphapapillomavirus</taxon>
        <taxon>Alphapapillomavirus 10</taxon>
    </lineage>
</organism>
<name>VE6_PCPV1</name>
<feature type="chain" id="PRO_0000133384" description="Protein E6">
    <location>
        <begin position="1"/>
        <end position="150"/>
    </location>
</feature>
<feature type="zinc finger region" evidence="1">
    <location>
        <begin position="31"/>
        <end position="67"/>
    </location>
</feature>
<feature type="zinc finger region" evidence="1">
    <location>
        <begin position="104"/>
        <end position="140"/>
    </location>
</feature>
<gene>
    <name evidence="1" type="primary">E6</name>
</gene>
<sequence>MEKANASTSAKTIDQLCKECNLCMHSLQILCVFCRKTLSTAEVYAFQYKDLNIVWQGNFPFAACACCLEIQGKVNQYRHFDFAAYAVTVEEEINKSIFDVRIRCYLCHKPLCDVEKLRHILEKARFIKLNCEWKGRCFHCWTSCMENILP</sequence>
<dbReference type="EMBL" id="X62844">
    <property type="protein sequence ID" value="CAA44655.1"/>
    <property type="molecule type" value="Genomic_DNA"/>
</dbReference>
<dbReference type="SMR" id="Q02270"/>
<dbReference type="Proteomes" id="UP000000469">
    <property type="component" value="Genome"/>
</dbReference>
<dbReference type="GO" id="GO:0030430">
    <property type="term" value="C:host cell cytoplasm"/>
    <property type="evidence" value="ECO:0007669"/>
    <property type="project" value="UniProtKB-SubCell"/>
</dbReference>
<dbReference type="GO" id="GO:0042025">
    <property type="term" value="C:host cell nucleus"/>
    <property type="evidence" value="ECO:0007669"/>
    <property type="project" value="UniProtKB-SubCell"/>
</dbReference>
<dbReference type="GO" id="GO:0003677">
    <property type="term" value="F:DNA binding"/>
    <property type="evidence" value="ECO:0007669"/>
    <property type="project" value="UniProtKB-UniRule"/>
</dbReference>
<dbReference type="GO" id="GO:0008270">
    <property type="term" value="F:zinc ion binding"/>
    <property type="evidence" value="ECO:0007669"/>
    <property type="project" value="UniProtKB-KW"/>
</dbReference>
<dbReference type="GO" id="GO:0006351">
    <property type="term" value="P:DNA-templated transcription"/>
    <property type="evidence" value="ECO:0007669"/>
    <property type="project" value="UniProtKB-UniRule"/>
</dbReference>
<dbReference type="GO" id="GO:0006355">
    <property type="term" value="P:regulation of DNA-templated transcription"/>
    <property type="evidence" value="ECO:0007669"/>
    <property type="project" value="UniProtKB-UniRule"/>
</dbReference>
<dbReference type="GO" id="GO:0052150">
    <property type="term" value="P:symbiont-mediated perturbation of host apoptosis"/>
    <property type="evidence" value="ECO:0007669"/>
    <property type="project" value="UniProtKB-KW"/>
</dbReference>
<dbReference type="GO" id="GO:0039648">
    <property type="term" value="P:symbiont-mediated perturbation of host ubiquitin-like protein modification"/>
    <property type="evidence" value="ECO:0007669"/>
    <property type="project" value="UniProtKB-UniRule"/>
</dbReference>
<dbReference type="GO" id="GO:0052170">
    <property type="term" value="P:symbiont-mediated suppression of host innate immune response"/>
    <property type="evidence" value="ECO:0007669"/>
    <property type="project" value="UniProtKB-KW"/>
</dbReference>
<dbReference type="GO" id="GO:0039502">
    <property type="term" value="P:symbiont-mediated suppression of host type I interferon-mediated signaling pathway"/>
    <property type="evidence" value="ECO:0007669"/>
    <property type="project" value="UniProtKB-UniRule"/>
</dbReference>
<dbReference type="Gene3D" id="3.30.240.40">
    <property type="entry name" value="E6 early regulatory protein"/>
    <property type="match status" value="2"/>
</dbReference>
<dbReference type="HAMAP" id="MF_04006">
    <property type="entry name" value="HPV_E6"/>
    <property type="match status" value="1"/>
</dbReference>
<dbReference type="InterPro" id="IPR001334">
    <property type="entry name" value="E6"/>
</dbReference>
<dbReference type="InterPro" id="IPR038575">
    <property type="entry name" value="E6_sf"/>
</dbReference>
<dbReference type="Pfam" id="PF00518">
    <property type="entry name" value="E6"/>
    <property type="match status" value="1"/>
</dbReference>
<dbReference type="SUPFAM" id="SSF161229">
    <property type="entry name" value="E6 C-terminal domain-like"/>
    <property type="match status" value="2"/>
</dbReference>
<organismHost>
    <name type="scientific">Pan paniscus</name>
    <name type="common">Pygmy chimpanzee</name>
    <name type="synonym">Bonobo</name>
    <dbReference type="NCBI Taxonomy" id="9597"/>
</organismHost>